<reference key="1">
    <citation type="journal article" date="2002" name="Science">
        <title>50 million years of genomic stasis in endosymbiotic bacteria.</title>
        <authorList>
            <person name="Tamas I."/>
            <person name="Klasson L."/>
            <person name="Canbaeck B."/>
            <person name="Naeslund A.K."/>
            <person name="Eriksson A.-S."/>
            <person name="Wernegreen J.J."/>
            <person name="Sandstroem J.P."/>
            <person name="Moran N.A."/>
            <person name="Andersson S.G.E."/>
        </authorList>
    </citation>
    <scope>NUCLEOTIDE SEQUENCE [LARGE SCALE GENOMIC DNA]</scope>
    <source>
        <strain>Sg</strain>
    </source>
</reference>
<proteinExistence type="inferred from homology"/>
<evidence type="ECO:0000255" key="1">
    <source>
        <dbReference type="HAMAP-Rule" id="MF_01107"/>
    </source>
</evidence>
<accession>P59086</accession>
<keyword id="KW-0028">Amino-acid biosynthesis</keyword>
<keyword id="KW-0032">Aminotransferase</keyword>
<keyword id="KW-0055">Arginine biosynthesis</keyword>
<keyword id="KW-0963">Cytoplasm</keyword>
<keyword id="KW-0457">Lysine biosynthesis</keyword>
<keyword id="KW-0663">Pyridoxal phosphate</keyword>
<keyword id="KW-0808">Transferase</keyword>
<protein>
    <recommendedName>
        <fullName evidence="1">Acetylornithine/succinyldiaminopimelate aminotransferase</fullName>
        <shortName evidence="1">ACOAT</shortName>
        <shortName evidence="1">DapATase</shortName>
        <shortName evidence="1">Succinyldiaminopimelate transferase</shortName>
        <ecNumber evidence="1">2.6.1.11</ecNumber>
        <ecNumber evidence="1">2.6.1.17</ecNumber>
    </recommendedName>
</protein>
<name>ARGD_BUCAP</name>
<organism>
    <name type="scientific">Buchnera aphidicola subsp. Schizaphis graminum (strain Sg)</name>
    <dbReference type="NCBI Taxonomy" id="198804"/>
    <lineage>
        <taxon>Bacteria</taxon>
        <taxon>Pseudomonadati</taxon>
        <taxon>Pseudomonadota</taxon>
        <taxon>Gammaproteobacteria</taxon>
        <taxon>Enterobacterales</taxon>
        <taxon>Erwiniaceae</taxon>
        <taxon>Buchnera</taxon>
    </lineage>
</organism>
<gene>
    <name evidence="1" type="primary">argD</name>
    <name evidence="1" type="synonym">dapC</name>
    <name type="ordered locus">BUsg_515</name>
</gene>
<sequence length="404" mass="44736">MIGKIKLITRDSFNKLILPVYNPAFFIPVKGKGSRLWDQKGKEYIDFSGGIAVTSLGHCHPVLNKVLRQQSKKLWHISNIFTNEPALRLADKLISSSFASRVFFANSGAEANEAAFKLARYYSSKIYNLKKNKIISFYNSFHGRTFFTVSVGGQAKYSDFFGPKPPAIMHAKFNEINSVKSIIDDNTCAVVMELIQGEGGIVPADVAFVREIRDLCYKYNALLIFDEIQTGIGRTSKLYAYEHYEVQPDILTIAKSLGSGFPISATLTTNGIASVIKPGIHGTTYGGNPLACSIAESVVNIVNTKKFLLGVEKKSKKIISELNIINKRFGLFTEIRGKGLLIGIVLRPELSEEIHNILNALFLEGVIVLTAGKNVIRLAPSLIISKRDIVEGMKRFYCALEKCL</sequence>
<comment type="function">
    <text evidence="1">Involved in both the arginine and lysine biosynthetic pathways.</text>
</comment>
<comment type="catalytic activity">
    <reaction evidence="1">
        <text>N(2)-acetyl-L-ornithine + 2-oxoglutarate = N-acetyl-L-glutamate 5-semialdehyde + L-glutamate</text>
        <dbReference type="Rhea" id="RHEA:18049"/>
        <dbReference type="ChEBI" id="CHEBI:16810"/>
        <dbReference type="ChEBI" id="CHEBI:29123"/>
        <dbReference type="ChEBI" id="CHEBI:29985"/>
        <dbReference type="ChEBI" id="CHEBI:57805"/>
        <dbReference type="EC" id="2.6.1.11"/>
    </reaction>
</comment>
<comment type="catalytic activity">
    <reaction evidence="1">
        <text>N-succinyl-(2S,6S)-2,6-diaminopimelate + 2-oxoglutarate = (S)-2-succinylamino-6-oxoheptanedioate + L-glutamate</text>
        <dbReference type="Rhea" id="RHEA:11960"/>
        <dbReference type="ChEBI" id="CHEBI:15685"/>
        <dbReference type="ChEBI" id="CHEBI:16810"/>
        <dbReference type="ChEBI" id="CHEBI:29985"/>
        <dbReference type="ChEBI" id="CHEBI:58087"/>
        <dbReference type="EC" id="2.6.1.17"/>
    </reaction>
</comment>
<comment type="cofactor">
    <cofactor evidence="1">
        <name>pyridoxal 5'-phosphate</name>
        <dbReference type="ChEBI" id="CHEBI:597326"/>
    </cofactor>
    <text evidence="1">Binds 1 pyridoxal phosphate per subunit.</text>
</comment>
<comment type="pathway">
    <text evidence="1">Amino-acid biosynthesis; L-arginine biosynthesis; N(2)-acetyl-L-ornithine from L-glutamate: step 4/4.</text>
</comment>
<comment type="pathway">
    <text evidence="1">Amino-acid biosynthesis; L-lysine biosynthesis via DAP pathway; LL-2,6-diaminopimelate from (S)-tetrahydrodipicolinate (succinylase route): step 2/3.</text>
</comment>
<comment type="subunit">
    <text evidence="1">Homodimer.</text>
</comment>
<comment type="subcellular location">
    <subcellularLocation>
        <location evidence="1">Cytoplasm</location>
    </subcellularLocation>
</comment>
<comment type="similarity">
    <text evidence="1">Belongs to the class-III pyridoxal-phosphate-dependent aminotransferase family. ArgD subfamily.</text>
</comment>
<feature type="chain" id="PRO_0000112735" description="Acetylornithine/succinyldiaminopimelate aminotransferase">
    <location>
        <begin position="1"/>
        <end position="404"/>
    </location>
</feature>
<feature type="binding site" evidence="1">
    <location>
        <begin position="108"/>
        <end position="109"/>
    </location>
    <ligand>
        <name>pyridoxal 5'-phosphate</name>
        <dbReference type="ChEBI" id="CHEBI:597326"/>
    </ligand>
</feature>
<feature type="binding site" evidence="1">
    <location>
        <position position="141"/>
    </location>
    <ligand>
        <name>pyridoxal 5'-phosphate</name>
        <dbReference type="ChEBI" id="CHEBI:597326"/>
    </ligand>
</feature>
<feature type="binding site" evidence="1">
    <location>
        <position position="144"/>
    </location>
    <ligand>
        <name>N(2)-acetyl-L-ornithine</name>
        <dbReference type="ChEBI" id="CHEBI:57805"/>
    </ligand>
</feature>
<feature type="binding site" evidence="1">
    <location>
        <begin position="226"/>
        <end position="229"/>
    </location>
    <ligand>
        <name>pyridoxal 5'-phosphate</name>
        <dbReference type="ChEBI" id="CHEBI:597326"/>
    </ligand>
</feature>
<feature type="binding site" evidence="1">
    <location>
        <position position="283"/>
    </location>
    <ligand>
        <name>N(2)-acetyl-L-ornithine</name>
        <dbReference type="ChEBI" id="CHEBI:57805"/>
    </ligand>
</feature>
<feature type="binding site" evidence="1">
    <location>
        <position position="284"/>
    </location>
    <ligand>
        <name>pyridoxal 5'-phosphate</name>
        <dbReference type="ChEBI" id="CHEBI:597326"/>
    </ligand>
</feature>
<feature type="modified residue" description="N6-(pyridoxal phosphate)lysine" evidence="1">
    <location>
        <position position="255"/>
    </location>
</feature>
<dbReference type="EC" id="2.6.1.11" evidence="1"/>
<dbReference type="EC" id="2.6.1.17" evidence="1"/>
<dbReference type="EMBL" id="AE013218">
    <property type="protein sequence ID" value="AAM68058.1"/>
    <property type="molecule type" value="Genomic_DNA"/>
</dbReference>
<dbReference type="RefSeq" id="WP_011054024.1">
    <property type="nucleotide sequence ID" value="NC_004061.1"/>
</dbReference>
<dbReference type="SMR" id="P59086"/>
<dbReference type="STRING" id="198804.BUsg_515"/>
<dbReference type="GeneID" id="93003990"/>
<dbReference type="KEGG" id="bas:BUsg_515"/>
<dbReference type="eggNOG" id="COG4992">
    <property type="taxonomic scope" value="Bacteria"/>
</dbReference>
<dbReference type="HOGENOM" id="CLU_016922_10_1_6"/>
<dbReference type="UniPathway" id="UPA00034">
    <property type="reaction ID" value="UER00020"/>
</dbReference>
<dbReference type="UniPathway" id="UPA00068">
    <property type="reaction ID" value="UER00109"/>
</dbReference>
<dbReference type="Proteomes" id="UP000000416">
    <property type="component" value="Chromosome"/>
</dbReference>
<dbReference type="GO" id="GO:0005737">
    <property type="term" value="C:cytoplasm"/>
    <property type="evidence" value="ECO:0007669"/>
    <property type="project" value="UniProtKB-SubCell"/>
</dbReference>
<dbReference type="GO" id="GO:0042802">
    <property type="term" value="F:identical protein binding"/>
    <property type="evidence" value="ECO:0007669"/>
    <property type="project" value="TreeGrafter"/>
</dbReference>
<dbReference type="GO" id="GO:0003992">
    <property type="term" value="F:N2-acetyl-L-ornithine:2-oxoglutarate 5-aminotransferase activity"/>
    <property type="evidence" value="ECO:0007669"/>
    <property type="project" value="UniProtKB-UniRule"/>
</dbReference>
<dbReference type="GO" id="GO:0030170">
    <property type="term" value="F:pyridoxal phosphate binding"/>
    <property type="evidence" value="ECO:0007669"/>
    <property type="project" value="InterPro"/>
</dbReference>
<dbReference type="GO" id="GO:0009016">
    <property type="term" value="F:succinyldiaminopimelate transaminase activity"/>
    <property type="evidence" value="ECO:0007669"/>
    <property type="project" value="UniProtKB-UniRule"/>
</dbReference>
<dbReference type="GO" id="GO:0006526">
    <property type="term" value="P:L-arginine biosynthetic process"/>
    <property type="evidence" value="ECO:0007669"/>
    <property type="project" value="UniProtKB-UniRule"/>
</dbReference>
<dbReference type="GO" id="GO:0009089">
    <property type="term" value="P:lysine biosynthetic process via diaminopimelate"/>
    <property type="evidence" value="ECO:0007669"/>
    <property type="project" value="UniProtKB-UniRule"/>
</dbReference>
<dbReference type="CDD" id="cd00610">
    <property type="entry name" value="OAT_like"/>
    <property type="match status" value="1"/>
</dbReference>
<dbReference type="FunFam" id="3.40.640.10:FF:000004">
    <property type="entry name" value="Acetylornithine aminotransferase"/>
    <property type="match status" value="1"/>
</dbReference>
<dbReference type="Gene3D" id="3.90.1150.10">
    <property type="entry name" value="Aspartate Aminotransferase, domain 1"/>
    <property type="match status" value="1"/>
</dbReference>
<dbReference type="Gene3D" id="3.40.640.10">
    <property type="entry name" value="Type I PLP-dependent aspartate aminotransferase-like (Major domain)"/>
    <property type="match status" value="1"/>
</dbReference>
<dbReference type="HAMAP" id="MF_01107">
    <property type="entry name" value="ArgD_aminotrans_3"/>
    <property type="match status" value="1"/>
</dbReference>
<dbReference type="InterPro" id="IPR004636">
    <property type="entry name" value="AcOrn/SuccOrn_fam"/>
</dbReference>
<dbReference type="InterPro" id="IPR005814">
    <property type="entry name" value="Aminotrans_3"/>
</dbReference>
<dbReference type="InterPro" id="IPR049704">
    <property type="entry name" value="Aminotrans_3_PPA_site"/>
</dbReference>
<dbReference type="InterPro" id="IPR050103">
    <property type="entry name" value="Class-III_PLP-dep_AT"/>
</dbReference>
<dbReference type="InterPro" id="IPR015424">
    <property type="entry name" value="PyrdxlP-dep_Trfase"/>
</dbReference>
<dbReference type="InterPro" id="IPR015421">
    <property type="entry name" value="PyrdxlP-dep_Trfase_major"/>
</dbReference>
<dbReference type="InterPro" id="IPR015422">
    <property type="entry name" value="PyrdxlP-dep_Trfase_small"/>
</dbReference>
<dbReference type="NCBIfam" id="TIGR00707">
    <property type="entry name" value="argD"/>
    <property type="match status" value="1"/>
</dbReference>
<dbReference type="NCBIfam" id="NF002325">
    <property type="entry name" value="PRK01278.1"/>
    <property type="match status" value="1"/>
</dbReference>
<dbReference type="NCBIfam" id="NF003468">
    <property type="entry name" value="PRK05093.1"/>
    <property type="match status" value="1"/>
</dbReference>
<dbReference type="PANTHER" id="PTHR11986">
    <property type="entry name" value="AMINOTRANSFERASE CLASS III"/>
    <property type="match status" value="1"/>
</dbReference>
<dbReference type="PANTHER" id="PTHR11986:SF113">
    <property type="entry name" value="SUCCINYLORNITHINE TRANSAMINASE"/>
    <property type="match status" value="1"/>
</dbReference>
<dbReference type="Pfam" id="PF00202">
    <property type="entry name" value="Aminotran_3"/>
    <property type="match status" value="1"/>
</dbReference>
<dbReference type="PIRSF" id="PIRSF000521">
    <property type="entry name" value="Transaminase_4ab_Lys_Orn"/>
    <property type="match status" value="1"/>
</dbReference>
<dbReference type="SUPFAM" id="SSF53383">
    <property type="entry name" value="PLP-dependent transferases"/>
    <property type="match status" value="1"/>
</dbReference>
<dbReference type="PROSITE" id="PS00600">
    <property type="entry name" value="AA_TRANSFER_CLASS_3"/>
    <property type="match status" value="1"/>
</dbReference>